<reference key="1">
    <citation type="journal article" date="2004" name="Proc. Natl. Acad. Sci. U.S.A.">
        <title>The genome sequence of the probiotic intestinal bacterium Lactobacillus johnsonii NCC 533.</title>
        <authorList>
            <person name="Pridmore R.D."/>
            <person name="Berger B."/>
            <person name="Desiere F."/>
            <person name="Vilanova D."/>
            <person name="Barretto C."/>
            <person name="Pittet A.-C."/>
            <person name="Zwahlen M.-C."/>
            <person name="Rouvet M."/>
            <person name="Altermann E."/>
            <person name="Barrangou R."/>
            <person name="Mollet B."/>
            <person name="Mercenier A."/>
            <person name="Klaenhammer T."/>
            <person name="Arigoni F."/>
            <person name="Schell M.A."/>
        </authorList>
    </citation>
    <scope>NUCLEOTIDE SEQUENCE [LARGE SCALE GENOMIC DNA]</scope>
    <source>
        <strain>CNCM I-1225 / La1 / NCC 533</strain>
    </source>
</reference>
<dbReference type="EC" id="5.3.1.6" evidence="1"/>
<dbReference type="EMBL" id="AE017198">
    <property type="protein sequence ID" value="AAS08619.1"/>
    <property type="molecule type" value="Genomic_DNA"/>
</dbReference>
<dbReference type="RefSeq" id="WP_011161735.1">
    <property type="nucleotide sequence ID" value="NC_005362.1"/>
</dbReference>
<dbReference type="SMR" id="Q74KF3"/>
<dbReference type="KEGG" id="ljo:LJ_0798"/>
<dbReference type="PATRIC" id="fig|257314.6.peg.654"/>
<dbReference type="eggNOG" id="COG0120">
    <property type="taxonomic scope" value="Bacteria"/>
</dbReference>
<dbReference type="HOGENOM" id="CLU_056590_1_0_9"/>
<dbReference type="UniPathway" id="UPA00115">
    <property type="reaction ID" value="UER00412"/>
</dbReference>
<dbReference type="Proteomes" id="UP000000581">
    <property type="component" value="Chromosome"/>
</dbReference>
<dbReference type="GO" id="GO:0005829">
    <property type="term" value="C:cytosol"/>
    <property type="evidence" value="ECO:0007669"/>
    <property type="project" value="TreeGrafter"/>
</dbReference>
<dbReference type="GO" id="GO:0004751">
    <property type="term" value="F:ribose-5-phosphate isomerase activity"/>
    <property type="evidence" value="ECO:0007669"/>
    <property type="project" value="UniProtKB-UniRule"/>
</dbReference>
<dbReference type="GO" id="GO:0006014">
    <property type="term" value="P:D-ribose metabolic process"/>
    <property type="evidence" value="ECO:0007669"/>
    <property type="project" value="TreeGrafter"/>
</dbReference>
<dbReference type="GO" id="GO:0009052">
    <property type="term" value="P:pentose-phosphate shunt, non-oxidative branch"/>
    <property type="evidence" value="ECO:0007669"/>
    <property type="project" value="UniProtKB-UniRule"/>
</dbReference>
<dbReference type="CDD" id="cd01398">
    <property type="entry name" value="RPI_A"/>
    <property type="match status" value="1"/>
</dbReference>
<dbReference type="FunFam" id="3.40.50.1360:FF:000001">
    <property type="entry name" value="Ribose-5-phosphate isomerase A"/>
    <property type="match status" value="1"/>
</dbReference>
<dbReference type="Gene3D" id="3.30.70.260">
    <property type="match status" value="1"/>
</dbReference>
<dbReference type="Gene3D" id="3.40.50.1360">
    <property type="match status" value="1"/>
</dbReference>
<dbReference type="HAMAP" id="MF_00170">
    <property type="entry name" value="Rib_5P_isom_A"/>
    <property type="match status" value="1"/>
</dbReference>
<dbReference type="InterPro" id="IPR037171">
    <property type="entry name" value="NagB/RpiA_transferase-like"/>
</dbReference>
<dbReference type="InterPro" id="IPR020672">
    <property type="entry name" value="Ribose5P_isomerase_typA_subgr"/>
</dbReference>
<dbReference type="InterPro" id="IPR004788">
    <property type="entry name" value="Ribose5P_isomerase_type_A"/>
</dbReference>
<dbReference type="NCBIfam" id="NF001924">
    <property type="entry name" value="PRK00702.1"/>
    <property type="match status" value="1"/>
</dbReference>
<dbReference type="NCBIfam" id="TIGR00021">
    <property type="entry name" value="rpiA"/>
    <property type="match status" value="1"/>
</dbReference>
<dbReference type="PANTHER" id="PTHR11934">
    <property type="entry name" value="RIBOSE-5-PHOSPHATE ISOMERASE"/>
    <property type="match status" value="1"/>
</dbReference>
<dbReference type="PANTHER" id="PTHR11934:SF0">
    <property type="entry name" value="RIBOSE-5-PHOSPHATE ISOMERASE"/>
    <property type="match status" value="1"/>
</dbReference>
<dbReference type="Pfam" id="PF06026">
    <property type="entry name" value="Rib_5-P_isom_A"/>
    <property type="match status" value="1"/>
</dbReference>
<dbReference type="SUPFAM" id="SSF75445">
    <property type="entry name" value="D-ribose-5-phosphate isomerase (RpiA), lid domain"/>
    <property type="match status" value="1"/>
</dbReference>
<dbReference type="SUPFAM" id="SSF100950">
    <property type="entry name" value="NagB/RpiA/CoA transferase-like"/>
    <property type="match status" value="1"/>
</dbReference>
<accession>Q74KF3</accession>
<protein>
    <recommendedName>
        <fullName evidence="1">Ribose-5-phosphate isomerase A</fullName>
        <ecNumber evidence="1">5.3.1.6</ecNumber>
    </recommendedName>
    <alternativeName>
        <fullName evidence="1">Phosphoriboisomerase A</fullName>
        <shortName evidence="1">PRI</shortName>
    </alternativeName>
</protein>
<evidence type="ECO:0000255" key="1">
    <source>
        <dbReference type="HAMAP-Rule" id="MF_00170"/>
    </source>
</evidence>
<proteinExistence type="inferred from homology"/>
<organism>
    <name type="scientific">Lactobacillus johnsonii (strain CNCM I-12250 / La1 / NCC 533)</name>
    <dbReference type="NCBI Taxonomy" id="257314"/>
    <lineage>
        <taxon>Bacteria</taxon>
        <taxon>Bacillati</taxon>
        <taxon>Bacillota</taxon>
        <taxon>Bacilli</taxon>
        <taxon>Lactobacillales</taxon>
        <taxon>Lactobacillaceae</taxon>
        <taxon>Lactobacillus</taxon>
    </lineage>
</organism>
<sequence>MNKTEQDQLKKEAATKAAKMVEPNSVLGVGTGSTVAFFIDALGERKEREGFSLKHIVTTSNRSKKQLEGLGFKVDELADIDQADLTVDGADRVDDNLDGIKGGGGALTLEKNVAINSKKIIWIVDESKLVHHLSGFPLPVEVLPVSAEQNFKRFEAEGLKPQWRLNDEGKRYVTHYGNYIIDLAADPTPVPHGLADYLDHTVGVVEHGLFLDMCDEVIIAHSDGTIEDKKRK</sequence>
<keyword id="KW-0413">Isomerase</keyword>
<name>RPIA_LACJO</name>
<feature type="chain" id="PRO_0000158426" description="Ribose-5-phosphate isomerase A">
    <location>
        <begin position="1"/>
        <end position="232"/>
    </location>
</feature>
<feature type="active site" description="Proton acceptor" evidence="1">
    <location>
        <position position="110"/>
    </location>
</feature>
<feature type="binding site" evidence="1">
    <location>
        <begin position="31"/>
        <end position="34"/>
    </location>
    <ligand>
        <name>substrate</name>
    </ligand>
</feature>
<feature type="binding site" evidence="1">
    <location>
        <begin position="88"/>
        <end position="91"/>
    </location>
    <ligand>
        <name>substrate</name>
    </ligand>
</feature>
<feature type="binding site" evidence="1">
    <location>
        <begin position="101"/>
        <end position="104"/>
    </location>
    <ligand>
        <name>substrate</name>
    </ligand>
</feature>
<feature type="binding site" evidence="1">
    <location>
        <position position="128"/>
    </location>
    <ligand>
        <name>substrate</name>
    </ligand>
</feature>
<comment type="function">
    <text evidence="1">Catalyzes the reversible conversion of ribose-5-phosphate to ribulose 5-phosphate.</text>
</comment>
<comment type="catalytic activity">
    <reaction evidence="1">
        <text>aldehydo-D-ribose 5-phosphate = D-ribulose 5-phosphate</text>
        <dbReference type="Rhea" id="RHEA:14657"/>
        <dbReference type="ChEBI" id="CHEBI:58121"/>
        <dbReference type="ChEBI" id="CHEBI:58273"/>
        <dbReference type="EC" id="5.3.1.6"/>
    </reaction>
</comment>
<comment type="pathway">
    <text evidence="1">Carbohydrate degradation; pentose phosphate pathway; D-ribose 5-phosphate from D-ribulose 5-phosphate (non-oxidative stage): step 1/1.</text>
</comment>
<comment type="subunit">
    <text evidence="1">Homodimer.</text>
</comment>
<comment type="similarity">
    <text evidence="1">Belongs to the ribose 5-phosphate isomerase family.</text>
</comment>
<gene>
    <name evidence="1" type="primary">rpiA</name>
    <name type="ordered locus">LJ_0798</name>
</gene>